<name>Y104_ADE07</name>
<protein>
    <recommendedName>
        <fullName>Uncharacterized 10.4 kDa early protein</fullName>
    </recommendedName>
</protein>
<feature type="chain" id="PRO_0000221915" description="Uncharacterized 10.4 kDa early protein">
    <location>
        <begin position="1"/>
        <end position="95"/>
    </location>
</feature>
<sequence length="95" mass="10458">MSEGKSVPDHDFEELILEVDVITGPLFPELEVRPLLVGGIGQSESNIIEEDLTGPGHEISGDFKRLRDLCSVIDNLSGQDDLIKAIDVVPHYVQF</sequence>
<organism>
    <name type="scientific">Human adenovirus B serotype 7</name>
    <name type="common">HAdV-7</name>
    <name type="synonym">Human adenovirus 7</name>
    <dbReference type="NCBI Taxonomy" id="10519"/>
    <lineage>
        <taxon>Viruses</taxon>
        <taxon>Varidnaviria</taxon>
        <taxon>Bamfordvirae</taxon>
        <taxon>Preplasmiviricota</taxon>
        <taxon>Tectiliviricetes</taxon>
        <taxon>Rowavirales</taxon>
        <taxon>Adenoviridae</taxon>
        <taxon>Mastadenovirus</taxon>
        <taxon>Human mastadenovirus B</taxon>
    </lineage>
</organism>
<proteinExistence type="predicted"/>
<keyword id="KW-0244">Early protein</keyword>
<reference key="1">
    <citation type="journal article" date="1983" name="Gene">
        <title>The nucleotide sequence of the genes encoded in early region 2b of human adenovirus type 7.</title>
        <authorList>
            <person name="Engler J.A."/>
            <person name="Hoppe M.S."/>
            <person name="van Bree M.P."/>
        </authorList>
    </citation>
    <scope>NUCLEOTIDE SEQUENCE [GENOMIC DNA]</scope>
    <source>
        <strain>Gomen</strain>
    </source>
</reference>
<organismHost>
    <name type="scientific">Homo sapiens</name>
    <name type="common">Human</name>
    <dbReference type="NCBI Taxonomy" id="9606"/>
</organismHost>
<accession>P05666</accession>
<dbReference type="EMBL" id="X03000">
    <property type="protein sequence ID" value="CAA26768.1"/>
    <property type="molecule type" value="Genomic_DNA"/>
</dbReference>